<keyword id="KW-0255">Endonuclease</keyword>
<keyword id="KW-0378">Hydrolase</keyword>
<keyword id="KW-0479">Metal-binding</keyword>
<keyword id="KW-0540">Nuclease</keyword>
<keyword id="KW-0819">tRNA processing</keyword>
<keyword id="KW-0862">Zinc</keyword>
<reference key="1">
    <citation type="submission" date="2005-07" db="EMBL/GenBank/DDBJ databases">
        <title>Complete sequence of Synechococcus sp. CC9605.</title>
        <authorList>
            <consortium name="US DOE Joint Genome Institute"/>
            <person name="Copeland A."/>
            <person name="Lucas S."/>
            <person name="Lapidus A."/>
            <person name="Barry K."/>
            <person name="Detter J.C."/>
            <person name="Glavina T."/>
            <person name="Hammon N."/>
            <person name="Israni S."/>
            <person name="Pitluck S."/>
            <person name="Schmutz J."/>
            <person name="Martinez M."/>
            <person name="Larimer F."/>
            <person name="Land M."/>
            <person name="Kyrpides N."/>
            <person name="Ivanova N."/>
            <person name="Richardson P."/>
        </authorList>
    </citation>
    <scope>NUCLEOTIDE SEQUENCE [LARGE SCALE GENOMIC DNA]</scope>
    <source>
        <strain>CC9605</strain>
    </source>
</reference>
<name>RNZ_SYNSC</name>
<sequence length="319" mass="34781">MQVTFLGTSSGVPTRARNVSAVALRLPQRSEMWLFDCGEGTQHQFLRSDLRLSQLRRVFITHMHGDHVFGLPGLLASLGLAGSSSAGVDLYGPDPLESYLNGVLRTSSTRIGYPLAVHRVRDAAEQGTLLFEDDDFTVRCTLLTHRVPAYAYRIEQKPLAGRFDIEKARELNIPPGPVYAQLKRGETVTLEDGRSIDGTSLCGEERPGVSVVYCTDTVFCEAAIELARGADLLIHESTFAHGEAEMAFQKQHSTSTMAAQTAAEAGVGQLVLTHLSPRYVLGNPVTPQDLLNEAKAIFPNTLLAKDFLSIDVKPRCNSS</sequence>
<dbReference type="EC" id="3.1.26.11" evidence="1"/>
<dbReference type="EMBL" id="CP000110">
    <property type="protein sequence ID" value="ABB35884.1"/>
    <property type="molecule type" value="Genomic_DNA"/>
</dbReference>
<dbReference type="RefSeq" id="WP_011365091.1">
    <property type="nucleotide sequence ID" value="NC_007516.1"/>
</dbReference>
<dbReference type="SMR" id="Q3AHP8"/>
<dbReference type="STRING" id="110662.Syncc9605_2145"/>
<dbReference type="KEGG" id="syd:Syncc9605_2145"/>
<dbReference type="eggNOG" id="COG1234">
    <property type="taxonomic scope" value="Bacteria"/>
</dbReference>
<dbReference type="HOGENOM" id="CLU_031317_2_0_3"/>
<dbReference type="OrthoDB" id="9800940at2"/>
<dbReference type="GO" id="GO:0042781">
    <property type="term" value="F:3'-tRNA processing endoribonuclease activity"/>
    <property type="evidence" value="ECO:0007669"/>
    <property type="project" value="UniProtKB-UniRule"/>
</dbReference>
<dbReference type="GO" id="GO:0008270">
    <property type="term" value="F:zinc ion binding"/>
    <property type="evidence" value="ECO:0007669"/>
    <property type="project" value="UniProtKB-UniRule"/>
</dbReference>
<dbReference type="CDD" id="cd07717">
    <property type="entry name" value="RNaseZ_ZiPD-like_MBL-fold"/>
    <property type="match status" value="1"/>
</dbReference>
<dbReference type="FunFam" id="3.60.15.10:FF:000002">
    <property type="entry name" value="Ribonuclease Z"/>
    <property type="match status" value="1"/>
</dbReference>
<dbReference type="Gene3D" id="3.60.15.10">
    <property type="entry name" value="Ribonuclease Z/Hydroxyacylglutathione hydrolase-like"/>
    <property type="match status" value="1"/>
</dbReference>
<dbReference type="HAMAP" id="MF_01818">
    <property type="entry name" value="RNase_Z_BN"/>
    <property type="match status" value="1"/>
</dbReference>
<dbReference type="InterPro" id="IPR001279">
    <property type="entry name" value="Metallo-B-lactamas"/>
</dbReference>
<dbReference type="InterPro" id="IPR036866">
    <property type="entry name" value="RibonucZ/Hydroxyglut_hydro"/>
</dbReference>
<dbReference type="InterPro" id="IPR013471">
    <property type="entry name" value="RNase_Z/BN"/>
</dbReference>
<dbReference type="NCBIfam" id="NF000801">
    <property type="entry name" value="PRK00055.1-3"/>
    <property type="match status" value="1"/>
</dbReference>
<dbReference type="NCBIfam" id="TIGR02651">
    <property type="entry name" value="RNase_Z"/>
    <property type="match status" value="1"/>
</dbReference>
<dbReference type="PANTHER" id="PTHR46018">
    <property type="entry name" value="ZINC PHOSPHODIESTERASE ELAC PROTEIN 1"/>
    <property type="match status" value="1"/>
</dbReference>
<dbReference type="PANTHER" id="PTHR46018:SF2">
    <property type="entry name" value="ZINC PHOSPHODIESTERASE ELAC PROTEIN 1"/>
    <property type="match status" value="1"/>
</dbReference>
<dbReference type="Pfam" id="PF00753">
    <property type="entry name" value="Lactamase_B"/>
    <property type="match status" value="1"/>
</dbReference>
<dbReference type="Pfam" id="PF12706">
    <property type="entry name" value="Lactamase_B_2"/>
    <property type="match status" value="1"/>
</dbReference>
<dbReference type="SUPFAM" id="SSF56281">
    <property type="entry name" value="Metallo-hydrolase/oxidoreductase"/>
    <property type="match status" value="1"/>
</dbReference>
<evidence type="ECO:0000255" key="1">
    <source>
        <dbReference type="HAMAP-Rule" id="MF_01818"/>
    </source>
</evidence>
<feature type="chain" id="PRO_1000070348" description="Ribonuclease Z">
    <location>
        <begin position="1"/>
        <end position="319"/>
    </location>
</feature>
<feature type="active site" description="Proton acceptor" evidence="1">
    <location>
        <position position="66"/>
    </location>
</feature>
<feature type="binding site" evidence="1">
    <location>
        <position position="62"/>
    </location>
    <ligand>
        <name>Zn(2+)</name>
        <dbReference type="ChEBI" id="CHEBI:29105"/>
        <label>1</label>
        <note>catalytic</note>
    </ligand>
</feature>
<feature type="binding site" evidence="1">
    <location>
        <position position="64"/>
    </location>
    <ligand>
        <name>Zn(2+)</name>
        <dbReference type="ChEBI" id="CHEBI:29105"/>
        <label>1</label>
        <note>catalytic</note>
    </ligand>
</feature>
<feature type="binding site" evidence="1">
    <location>
        <position position="66"/>
    </location>
    <ligand>
        <name>Zn(2+)</name>
        <dbReference type="ChEBI" id="CHEBI:29105"/>
        <label>2</label>
        <note>catalytic</note>
    </ligand>
</feature>
<feature type="binding site" evidence="1">
    <location>
        <position position="67"/>
    </location>
    <ligand>
        <name>Zn(2+)</name>
        <dbReference type="ChEBI" id="CHEBI:29105"/>
        <label>2</label>
        <note>catalytic</note>
    </ligand>
</feature>
<feature type="binding site" evidence="1">
    <location>
        <position position="145"/>
    </location>
    <ligand>
        <name>Zn(2+)</name>
        <dbReference type="ChEBI" id="CHEBI:29105"/>
        <label>1</label>
        <note>catalytic</note>
    </ligand>
</feature>
<feature type="binding site" evidence="1">
    <location>
        <position position="216"/>
    </location>
    <ligand>
        <name>Zn(2+)</name>
        <dbReference type="ChEBI" id="CHEBI:29105"/>
        <label>1</label>
        <note>catalytic</note>
    </ligand>
</feature>
<feature type="binding site" evidence="1">
    <location>
        <position position="216"/>
    </location>
    <ligand>
        <name>Zn(2+)</name>
        <dbReference type="ChEBI" id="CHEBI:29105"/>
        <label>2</label>
        <note>catalytic</note>
    </ligand>
</feature>
<feature type="binding site" evidence="1">
    <location>
        <position position="274"/>
    </location>
    <ligand>
        <name>Zn(2+)</name>
        <dbReference type="ChEBI" id="CHEBI:29105"/>
        <label>2</label>
        <note>catalytic</note>
    </ligand>
</feature>
<comment type="function">
    <text evidence="1">Zinc phosphodiesterase, which displays some tRNA 3'-processing endonuclease activity. Probably involved in tRNA maturation, by removing a 3'-trailer from precursor tRNA.</text>
</comment>
<comment type="catalytic activity">
    <reaction evidence="1">
        <text>Endonucleolytic cleavage of RNA, removing extra 3' nucleotides from tRNA precursor, generating 3' termini of tRNAs. A 3'-hydroxy group is left at the tRNA terminus and a 5'-phosphoryl group is left at the trailer molecule.</text>
        <dbReference type="EC" id="3.1.26.11"/>
    </reaction>
</comment>
<comment type="cofactor">
    <cofactor evidence="1">
        <name>Zn(2+)</name>
        <dbReference type="ChEBI" id="CHEBI:29105"/>
    </cofactor>
    <text evidence="1">Binds 2 Zn(2+) ions.</text>
</comment>
<comment type="subunit">
    <text evidence="1">Homodimer.</text>
</comment>
<comment type="similarity">
    <text evidence="1">Belongs to the RNase Z family.</text>
</comment>
<organism>
    <name type="scientific">Synechococcus sp. (strain CC9605)</name>
    <dbReference type="NCBI Taxonomy" id="110662"/>
    <lineage>
        <taxon>Bacteria</taxon>
        <taxon>Bacillati</taxon>
        <taxon>Cyanobacteriota</taxon>
        <taxon>Cyanophyceae</taxon>
        <taxon>Synechococcales</taxon>
        <taxon>Synechococcaceae</taxon>
        <taxon>Synechococcus</taxon>
    </lineage>
</organism>
<gene>
    <name evidence="1" type="primary">rnz</name>
    <name type="ordered locus">Syncc9605_2145</name>
</gene>
<accession>Q3AHP8</accession>
<proteinExistence type="inferred from homology"/>
<protein>
    <recommendedName>
        <fullName evidence="1">Ribonuclease Z</fullName>
        <shortName evidence="1">RNase Z</shortName>
        <ecNumber evidence="1">3.1.26.11</ecNumber>
    </recommendedName>
    <alternativeName>
        <fullName evidence="1">tRNA 3 endonuclease</fullName>
    </alternativeName>
    <alternativeName>
        <fullName evidence="1">tRNase Z</fullName>
    </alternativeName>
</protein>